<gene>
    <name type="primary">atl</name>
    <name type="synonym">nag</name>
</gene>
<keyword id="KW-0961">Cell wall biogenesis/degradation</keyword>
<keyword id="KW-0378">Hydrolase</keyword>
<keyword id="KW-0511">Multifunctional enzyme</keyword>
<keyword id="KW-0677">Repeat</keyword>
<keyword id="KW-0964">Secreted</keyword>
<keyword id="KW-0732">Signal</keyword>
<protein>
    <recommendedName>
        <fullName>Bifunctional autolysin</fullName>
    </recommendedName>
    <domain>
        <recommendedName>
            <fullName>N-acetylmuramoyl-L-alanine amidase</fullName>
            <ecNumber>3.5.1.28</ecNumber>
        </recommendedName>
    </domain>
    <domain>
        <recommendedName>
            <fullName>Mannosyl-glycoprotein endo-beta-N-acetylglucosaminidase</fullName>
            <ecNumber>3.2.1.96</ecNumber>
        </recommendedName>
    </domain>
</protein>
<proteinExistence type="evidence at protein level"/>
<comment type="function">
    <text evidence="4">Endohydrolysis of the di-N-acetylchitobiosyl unit in high-mannose glycopeptides and glycoproteins containing the -[(Man)5(GlcNAc)2]-Asn structure. One N-acetyl-D-glucosamine residue remains attached to the protein; the rest of the oligosaccharide is released intact. Cleaves the peptidoglycan connecting the daughter cells at the end of the cell division cycle, resulting in the separation of the two newly divided cells. Acts as an autolysin in penicillin-induced lysis.</text>
</comment>
<comment type="catalytic activity">
    <reaction>
        <text>Hydrolyzes the link between N-acetylmuramoyl residues and L-amino acid residues in certain cell-wall glycopeptides.</text>
        <dbReference type="EC" id="3.5.1.28"/>
    </reaction>
</comment>
<comment type="catalytic activity">
    <reaction>
        <text>an N(4)-(oligosaccharide-(1-&gt;3)-[oligosaccharide-(1-&gt;6)]-beta-D-Man-(1-&gt;4)-beta-D-GlcNAc-(1-&gt;4)-alpha-D-GlcNAc)-L-asparaginyl-[protein] + H2O = an oligosaccharide-(1-&gt;3)-[oligosaccharide-(1-&gt;6)]-beta-D-Man-(1-&gt;4)-D-GlcNAc + N(4)-(N-acetyl-beta-D-glucosaminyl)-L-asparaginyl-[protein]</text>
        <dbReference type="Rhea" id="RHEA:73067"/>
        <dbReference type="Rhea" id="RHEA-COMP:12603"/>
        <dbReference type="Rhea" id="RHEA-COMP:18176"/>
        <dbReference type="ChEBI" id="CHEBI:15377"/>
        <dbReference type="ChEBI" id="CHEBI:132248"/>
        <dbReference type="ChEBI" id="CHEBI:192714"/>
        <dbReference type="ChEBI" id="CHEBI:192715"/>
        <dbReference type="EC" id="3.2.1.96"/>
    </reaction>
</comment>
<comment type="subunit">
    <text evidence="5">Oligomer; forms a ring structure at the cell surface which is important for efficient partitioning of daughter cells after cell division.</text>
</comment>
<comment type="subcellular location">
    <subcellularLocation>
        <location evidence="5 6 7">Secreted</location>
    </subcellularLocation>
    <text>Secreted, and then anchored on the cell surface at the peripheral cell wall above the completed septum (septal region), for the next cell division cycle.</text>
</comment>
<comment type="domain">
    <text evidence="8">The GW domains are responsible for directing the proteins to the septal region.</text>
</comment>
<comment type="PTM">
    <text>Undergoes proteolytic processing to generate the two extracellular lytic enzymes, probably at the septal region on the cell surface.</text>
</comment>
<comment type="similarity">
    <text evidence="9">In the N-terminal section; belongs to the N-acetylmuramoyl-L-alanine amidase 2 family.</text>
</comment>
<comment type="similarity">
    <text evidence="9">In the C-terminal section; belongs to the glycosyl hydrolase 73 family.</text>
</comment>
<comment type="sequence caution" evidence="9">
    <conflict type="erroneous initiation">
        <sequence resource="EMBL-CDS" id="AAP44166"/>
    </conflict>
</comment>
<sequence>MLGVINRMAKKFNYKLPSMVALTLVGSAVTAHQVQAAETTQDQTTNKNVLDSNKVKATTEQAKAEVKNPTQNISGTQVYQDPAIVQPKTANNKTGNAQVSQKVDTAQVNGDTRANQSATTNNTQPVAKSTSTTAPKTNTNVTNAGYSLVDDEDDNSEHQINPELIKSAAKPAALETQYKAAAPKAKTEATPKVTTFSASAQPRSVAATPKTSLPKYKPQVNSSINDYIRKNNLKAPKIEEDYTSYFPKYAYRNGVGRPEGIVVHDTANDRSTINGEISYMKNNYQNAFVHAFVDGDRIIETAPTDYLSWGVGAVGNPRFINVEIVHTHDYASFARSMNNYADYAATQLQYYGLKPDSAEYDGNGTVWTHYAVSKYLGGTDHADPHGYLRSHNYSYDQLYDLINEKYLIKMGKVAPWGTQFTTTPTTPSKPTTPSKPSTGKLTVAANNGVAQIKPTNSGLYTTVYDKTGKATNEVQKTFAVSKTATLGNQKFYLVQDYNSGNKFGWVKEGDVVYNTAKSPVNVNQSYSIKSGTKLYTVPWGTSKQVAGSVSGSGNQTFKASKQQQIDKSIYLYGSVNGKSGWVSKAYLVDTAKPTPTPIPKPSTPTTNNKLTVSSLNGVAQINAKNNGLFTTVYDKTGKPTKEVQKTFAVTKEASLGGNKFYLVKDYNSPTLIGWVKQGDVIYNNAKSPVNVMQTYTVKPGTKLYSVPWGTYKQEAGAVSGTGNQTFKATKQQQIDKSIYLFGTVNGKSGWVSKAYLAVPAAPKKAVAQPKTAVKAYTVTKPQTTQTVSKIAQVKPNNTGIRASVYEKTAKNGAKYADRTFYVTKERAHGNETYVLLNNTSHNIPLGWFNVKDLNVQNLGKEVKTTQKYTVNKSNNGLSMVPWGTKNQVILTGNNIAQGTFNATKQVSVGKDVYLYGTINNRTGWVNAKDLTAPTAVKPTTSAAKDYNYTYVIKNGNGYYYVTPNSDTAKYSLKAFNEQPFAVVKEQVINGQTWYYGKLSNGKLAWIKSTDLAKELIKYNQTGMTLNQVAQIQAGLQYKPQVQRVPGKWTDANFNDVKHAMDTKRLAQDPALKYQFLRLDQPQNISIDKINQFLKGKGVLENQGAAFNKAAQMYGINEVYLISHALLETGNGTSQLAKGADVVNNKVVTNSNTKYHNVFGIAAYDNDPLREGIKYAKQAGWDTVSKAIVGGAKFIGNSYVKAGQNTLYKMRWNPAHPGTHQYATDVDWANINAKIIKGYYDKIGEVGKYFDIPQYK</sequence>
<organism>
    <name type="scientific">Staphylococcus aureus</name>
    <dbReference type="NCBI Taxonomy" id="1280"/>
    <lineage>
        <taxon>Bacteria</taxon>
        <taxon>Bacillati</taxon>
        <taxon>Bacillota</taxon>
        <taxon>Bacilli</taxon>
        <taxon>Bacillales</taxon>
        <taxon>Staphylococcaceae</taxon>
        <taxon>Staphylococcus</taxon>
    </lineage>
</organism>
<evidence type="ECO:0000255" key="1"/>
<evidence type="ECO:0000255" key="2">
    <source>
        <dbReference type="PROSITE-ProRule" id="PRU01116"/>
    </source>
</evidence>
<evidence type="ECO:0000256" key="3">
    <source>
        <dbReference type="SAM" id="MobiDB-lite"/>
    </source>
</evidence>
<evidence type="ECO:0000269" key="4">
    <source>
    </source>
</evidence>
<evidence type="ECO:0000269" key="5">
    <source>
    </source>
</evidence>
<evidence type="ECO:0000269" key="6">
    <source>
    </source>
</evidence>
<evidence type="ECO:0000269" key="7">
    <source>
    </source>
</evidence>
<evidence type="ECO:0000269" key="8">
    <source>
    </source>
</evidence>
<evidence type="ECO:0000305" key="9"/>
<dbReference type="EC" id="3.5.1.28"/>
<dbReference type="EC" id="3.2.1.96"/>
<dbReference type="EMBL" id="AF537210">
    <property type="protein sequence ID" value="AAP44166.1"/>
    <property type="status" value="ALT_INIT"/>
    <property type="molecule type" value="Genomic_DNA"/>
</dbReference>
<dbReference type="EMBL" id="D42078">
    <property type="protein sequence ID" value="BAA22600.1"/>
    <property type="molecule type" value="Genomic_DNA"/>
</dbReference>
<dbReference type="SMR" id="P0C5Z8"/>
<dbReference type="CAZy" id="GH73">
    <property type="family name" value="Glycoside Hydrolase Family 73"/>
</dbReference>
<dbReference type="GO" id="GO:0005576">
    <property type="term" value="C:extracellular region"/>
    <property type="evidence" value="ECO:0007669"/>
    <property type="project" value="UniProtKB-SubCell"/>
</dbReference>
<dbReference type="GO" id="GO:0004040">
    <property type="term" value="F:amidase activity"/>
    <property type="evidence" value="ECO:0007669"/>
    <property type="project" value="InterPro"/>
</dbReference>
<dbReference type="GO" id="GO:0033925">
    <property type="term" value="F:mannosyl-glycoprotein endo-beta-N-acetylglucosaminidase activity"/>
    <property type="evidence" value="ECO:0007669"/>
    <property type="project" value="UniProtKB-EC"/>
</dbReference>
<dbReference type="GO" id="GO:0008745">
    <property type="term" value="F:N-acetylmuramoyl-L-alanine amidase activity"/>
    <property type="evidence" value="ECO:0007669"/>
    <property type="project" value="UniProtKB-EC"/>
</dbReference>
<dbReference type="GO" id="GO:0071555">
    <property type="term" value="P:cell wall organization"/>
    <property type="evidence" value="ECO:0007669"/>
    <property type="project" value="UniProtKB-KW"/>
</dbReference>
<dbReference type="GO" id="GO:0009253">
    <property type="term" value="P:peptidoglycan catabolic process"/>
    <property type="evidence" value="ECO:0007669"/>
    <property type="project" value="InterPro"/>
</dbReference>
<dbReference type="CDD" id="cd06583">
    <property type="entry name" value="PGRP"/>
    <property type="match status" value="1"/>
</dbReference>
<dbReference type="Gene3D" id="1.10.530.10">
    <property type="match status" value="1"/>
</dbReference>
<dbReference type="Gene3D" id="2.30.30.170">
    <property type="match status" value="7"/>
</dbReference>
<dbReference type="Gene3D" id="3.40.80.10">
    <property type="entry name" value="Peptidoglycan recognition protein-like"/>
    <property type="match status" value="1"/>
</dbReference>
<dbReference type="InterPro" id="IPR036505">
    <property type="entry name" value="Amidase/PGRP_sf"/>
</dbReference>
<dbReference type="InterPro" id="IPR002502">
    <property type="entry name" value="Amidase_domain"/>
</dbReference>
<dbReference type="InterPro" id="IPR025987">
    <property type="entry name" value="GW_dom"/>
</dbReference>
<dbReference type="InterPro" id="IPR038200">
    <property type="entry name" value="GW_dom_sf"/>
</dbReference>
<dbReference type="InterPro" id="IPR002901">
    <property type="entry name" value="MGlyc_endo_b_GlcNAc-like_dom"/>
</dbReference>
<dbReference type="Pfam" id="PF01510">
    <property type="entry name" value="Amidase_2"/>
    <property type="match status" value="1"/>
</dbReference>
<dbReference type="Pfam" id="PF01832">
    <property type="entry name" value="Glucosaminidase"/>
    <property type="match status" value="1"/>
</dbReference>
<dbReference type="Pfam" id="PF13457">
    <property type="entry name" value="GW"/>
    <property type="match status" value="6"/>
</dbReference>
<dbReference type="SMART" id="SM00644">
    <property type="entry name" value="Ami_2"/>
    <property type="match status" value="1"/>
</dbReference>
<dbReference type="SMART" id="SM00047">
    <property type="entry name" value="LYZ2"/>
    <property type="match status" value="1"/>
</dbReference>
<dbReference type="SUPFAM" id="SSF55846">
    <property type="entry name" value="N-acetylmuramoyl-L-alanine amidase-like"/>
    <property type="match status" value="1"/>
</dbReference>
<dbReference type="SUPFAM" id="SSF82057">
    <property type="entry name" value="Prokaryotic SH3-related domain"/>
    <property type="match status" value="1"/>
</dbReference>
<dbReference type="PROSITE" id="PS51780">
    <property type="entry name" value="GW"/>
    <property type="match status" value="7"/>
</dbReference>
<name>ATL_STAAU</name>
<feature type="signal peptide" evidence="1">
    <location>
        <begin position="1"/>
        <end position="36"/>
    </location>
</feature>
<feature type="chain" id="PRO_0000012114" description="Bifunctional autolysin">
    <location>
        <begin position="37"/>
        <end position="1255"/>
    </location>
</feature>
<feature type="domain" description="GW 1" evidence="2">
    <location>
        <begin position="442"/>
        <end position="516"/>
    </location>
</feature>
<feature type="domain" description="GW 2" evidence="2">
    <location>
        <begin position="518"/>
        <end position="592"/>
    </location>
</feature>
<feature type="domain" description="GW 3" evidence="2">
    <location>
        <begin position="611"/>
        <end position="685"/>
    </location>
</feature>
<feature type="domain" description="GW 4" evidence="2">
    <location>
        <begin position="687"/>
        <end position="761"/>
    </location>
</feature>
<feature type="domain" description="GW 5" evidence="2">
    <location>
        <begin position="783"/>
        <end position="858"/>
    </location>
</feature>
<feature type="domain" description="GW 6" evidence="2">
    <location>
        <begin position="860"/>
        <end position="935"/>
    </location>
</feature>
<feature type="domain" description="GW 7" evidence="2">
    <location>
        <begin position="942"/>
        <end position="1016"/>
    </location>
</feature>
<feature type="region of interest" description="Disordered" evidence="3">
    <location>
        <begin position="110"/>
        <end position="141"/>
    </location>
</feature>
<feature type="region of interest" description="Disordered" evidence="3">
    <location>
        <begin position="193"/>
        <end position="218"/>
    </location>
</feature>
<feature type="region of interest" description="N-acetylmuramoyl-L-alanine amidase">
    <location>
        <begin position="199"/>
        <end position="775"/>
    </location>
</feature>
<feature type="region of interest" description="Endo-beta-N-acetylglucosaminidase">
    <location>
        <begin position="776"/>
        <end position="1255"/>
    </location>
</feature>
<feature type="sequence conflict" description="In Ref. 2; BAA22600." evidence="9" ref="2">
    <original>A</original>
    <variation>R</variation>
    <location>
        <position position="932"/>
    </location>
</feature>
<accession>P0C5Z8</accession>
<accession>O32391</accession>
<accession>P0C1R4</accession>
<accession>P52081</accession>
<accession>Q7WTC6</accession>
<accession>Q7WY94</accession>
<accession>Q7WY95</accession>
<reference key="1">
    <citation type="journal article" date="2003" name="Antimicrob. Agents Chemother.">
        <title>Resistance to autolysis in vancomycin-selected Staphylococcus aureus isolates precedes vancomycin-intermediate resistance.</title>
        <authorList>
            <person name="Boyle-Vavra S."/>
            <person name="Challapalli M."/>
            <person name="Daum R.S."/>
        </authorList>
    </citation>
    <scope>NUCLEOTIDE SEQUENCE [GENOMIC DNA]</scope>
    <source>
        <strain>IL-A</strain>
    </source>
</reference>
<reference key="2">
    <citation type="submission" date="1994-11" db="EMBL/GenBank/DDBJ databases">
        <title>Novel cytotoxin in a clinical isolate of methicillin-resistant S. aureus: cloning, sequencing and expression.</title>
        <authorList>
            <person name="Kamitani S."/>
            <person name="Minamide W."/>
            <person name="Yutsudo T."/>
            <person name="Noda M."/>
        </authorList>
    </citation>
    <scope>NUCLEOTIDE SEQUENCE [GENOMIC DNA] OF 775-1255</scope>
</reference>
<reference key="3">
    <citation type="journal article" date="1995" name="J. Bacteriol.">
        <title>Identification of endo-beta-N-acetylglucosaminidase and N-acetylmuramyl-L-alanine amidase as cluster-dispersing enzymes in Staphylococcus aureus.</title>
        <authorList>
            <person name="Sugai M."/>
            <person name="Komatsuzawa H."/>
            <person name="Akiyama T."/>
            <person name="Hong Y.-M."/>
            <person name="Oshida T."/>
            <person name="Miyake Y."/>
            <person name="Yamaguchi T."/>
            <person name="Suginaka H."/>
        </authorList>
    </citation>
    <scope>FUNCTION</scope>
    <source>
        <strain>ATCC 6538P / DSM 346 / JCM 2151 / NBRC 12732 / NCIMB 8625 / NCTC 7447 / NRRL B-313 / FDA 209P</strain>
    </source>
</reference>
<reference key="4">
    <citation type="journal article" date="1996" name="J. Bacteriol.">
        <title>An autolysin ring associated with cell separation of Staphylococcus aureus.</title>
        <authorList>
            <person name="Yamada S."/>
            <person name="Sugai M."/>
            <person name="Komatsuzawa H."/>
            <person name="Nakashima S."/>
            <person name="Oshida T."/>
            <person name="Matsumoto A."/>
            <person name="Suginaka H."/>
        </authorList>
    </citation>
    <scope>SUBCELLULAR LOCATION</scope>
    <scope>SUBUNIT</scope>
    <source>
        <strain>ATCC 6538P / DSM 346 / JCM 2151 / NBRC 12732 / NCIMB 8625 / NCTC 7447 / NRRL B-313 / FDA 209P</strain>
    </source>
</reference>
<reference key="5">
    <citation type="journal article" date="1997" name="Microbiol. Immunol.">
        <title>Subcellular localization of the major autolysin, ATL and its processed proteins in Staphylococcus aureus.</title>
        <authorList>
            <person name="Komatsuzawa H."/>
            <person name="Sugai M."/>
            <person name="Nakashima S."/>
            <person name="Yamada S."/>
            <person name="Matsumoto A."/>
            <person name="Oshida T."/>
            <person name="Suginaka H."/>
        </authorList>
    </citation>
    <scope>SUBCELLULAR LOCATION</scope>
    <source>
        <strain>ATCC 6538P / DSM 346 / JCM 2151 / NBRC 12732 / NCIMB 8625 / NCTC 7447 / NRRL B-313 / FDA 209P</strain>
    </source>
</reference>
<reference key="6">
    <citation type="journal article" date="1997" name="J. Bacteriol.">
        <title>Localized perforation of the cell wall by a major autolysin: atl gene products and the onset of penicillin-induced lysis of Staphylococcus aureus.</title>
        <authorList>
            <person name="Sugai M."/>
            <person name="Yamada S."/>
            <person name="Nakashima S."/>
            <person name="Komatsuzawa H."/>
            <person name="Matsumoto A."/>
            <person name="Oshida T."/>
            <person name="Suginaka H."/>
        </authorList>
    </citation>
    <scope>SUBCELLULAR LOCATION</scope>
    <source>
        <strain>ATCC 6538P / DSM 346 / JCM 2151 / NBRC 12732 / NCIMB 8625 / NCTC 7447 / NRRL B-313 / FDA 209P</strain>
    </source>
</reference>
<reference key="7">
    <citation type="journal article" date="1998" name="EMBO J.">
        <title>Targeting of muralytic enzymes to the cell division site of Gram-positive bacteria: repeat domains direct autolysin to the equatorial surface ring of Staphylococcus aureus.</title>
        <authorList>
            <person name="Baba T."/>
            <person name="Schneewind O."/>
        </authorList>
    </citation>
    <scope>ROLE OF REPEATS IN LOCALIZATION AT THE SEPTAL REGION</scope>
    <source>
        <strain>OS2</strain>
    </source>
</reference>
<reference key="8">
    <citation type="journal article" date="2000" name="Microbiol. Immunol.">
        <title>Modification of autolysis by synthetic peptides derived from the presumptive binding domain of Staphylococcus aureus autolysin.</title>
        <authorList>
            <person name="Takano M."/>
            <person name="Oshida T."/>
            <person name="Yasojima A."/>
            <person name="Yamada M."/>
            <person name="Okagaki C."/>
            <person name="Sugai M."/>
            <person name="Suginaka H."/>
            <person name="Matsushita T."/>
        </authorList>
    </citation>
    <scope>BINDING TO THE BACTERIAL CELL WALL</scope>
</reference>